<accession>Q90352</accession>
<dbReference type="EMBL" id="X76321">
    <property type="protein sequence ID" value="CAA53958.1"/>
    <property type="molecule type" value="mRNA"/>
</dbReference>
<dbReference type="PIR" id="I50132">
    <property type="entry name" value="I50132"/>
</dbReference>
<dbReference type="SMR" id="Q90352"/>
<dbReference type="GO" id="GO:0005886">
    <property type="term" value="C:plasma membrane"/>
    <property type="evidence" value="ECO:0007669"/>
    <property type="project" value="UniProtKB-SubCell"/>
</dbReference>
<dbReference type="GO" id="GO:0042277">
    <property type="term" value="F:peptide binding"/>
    <property type="evidence" value="ECO:0007669"/>
    <property type="project" value="TreeGrafter"/>
</dbReference>
<dbReference type="GO" id="GO:0005000">
    <property type="term" value="F:vasopressin receptor activity"/>
    <property type="evidence" value="ECO:0007669"/>
    <property type="project" value="InterPro"/>
</dbReference>
<dbReference type="GO" id="GO:0032870">
    <property type="term" value="P:cellular response to hormone stimulus"/>
    <property type="evidence" value="ECO:0007669"/>
    <property type="project" value="TreeGrafter"/>
</dbReference>
<dbReference type="GO" id="GO:0045907">
    <property type="term" value="P:positive regulation of vasoconstriction"/>
    <property type="evidence" value="ECO:0007669"/>
    <property type="project" value="TreeGrafter"/>
</dbReference>
<dbReference type="GO" id="GO:0001992">
    <property type="term" value="P:regulation of systemic arterial blood pressure by vasopressin"/>
    <property type="evidence" value="ECO:0007669"/>
    <property type="project" value="TreeGrafter"/>
</dbReference>
<dbReference type="CDD" id="cd15385">
    <property type="entry name" value="7tmA_V1aR"/>
    <property type="match status" value="1"/>
</dbReference>
<dbReference type="FunFam" id="1.20.1070.10:FF:000094">
    <property type="entry name" value="Vasopressin V1a receptor"/>
    <property type="match status" value="1"/>
</dbReference>
<dbReference type="Gene3D" id="1.20.1070.10">
    <property type="entry name" value="Rhodopsin 7-helix transmembrane proteins"/>
    <property type="match status" value="1"/>
</dbReference>
<dbReference type="InterPro" id="IPR000276">
    <property type="entry name" value="GPCR_Rhodpsn"/>
</dbReference>
<dbReference type="InterPro" id="IPR017452">
    <property type="entry name" value="GPCR_Rhodpsn_7TM"/>
</dbReference>
<dbReference type="InterPro" id="IPR015076">
    <property type="entry name" value="V1R_C"/>
</dbReference>
<dbReference type="InterPro" id="IPR001817">
    <property type="entry name" value="Vasoprsn_rcpt"/>
</dbReference>
<dbReference type="InterPro" id="IPR001224">
    <property type="entry name" value="Vprs_V1A_rcpt"/>
</dbReference>
<dbReference type="PANTHER" id="PTHR24241">
    <property type="entry name" value="NEUROPEPTIDE RECEPTOR-RELATED G-PROTEIN COUPLED RECEPTOR"/>
    <property type="match status" value="1"/>
</dbReference>
<dbReference type="PANTHER" id="PTHR24241:SF17">
    <property type="entry name" value="VASOPRESSIN V1A RECEPTOR"/>
    <property type="match status" value="1"/>
</dbReference>
<dbReference type="Pfam" id="PF00001">
    <property type="entry name" value="7tm_1"/>
    <property type="match status" value="1"/>
</dbReference>
<dbReference type="Pfam" id="PF08983">
    <property type="entry name" value="V1R_C"/>
    <property type="match status" value="1"/>
</dbReference>
<dbReference type="PRINTS" id="PR00237">
    <property type="entry name" value="GPCRRHODOPSN"/>
</dbReference>
<dbReference type="PRINTS" id="PR00896">
    <property type="entry name" value="VASOPRESSINR"/>
</dbReference>
<dbReference type="PRINTS" id="PR00752">
    <property type="entry name" value="VASOPRSNV1AR"/>
</dbReference>
<dbReference type="SMART" id="SM01164">
    <property type="entry name" value="DUF1856"/>
    <property type="match status" value="1"/>
</dbReference>
<dbReference type="SUPFAM" id="SSF81321">
    <property type="entry name" value="Family A G protein-coupled receptor-like"/>
    <property type="match status" value="1"/>
</dbReference>
<dbReference type="PROSITE" id="PS00237">
    <property type="entry name" value="G_PROTEIN_RECEP_F1_1"/>
    <property type="match status" value="1"/>
</dbReference>
<dbReference type="PROSITE" id="PS50262">
    <property type="entry name" value="G_PROTEIN_RECEP_F1_2"/>
    <property type="match status" value="1"/>
</dbReference>
<keyword id="KW-1003">Cell membrane</keyword>
<keyword id="KW-1015">Disulfide bond</keyword>
<keyword id="KW-0297">G-protein coupled receptor</keyword>
<keyword id="KW-0325">Glycoprotein</keyword>
<keyword id="KW-0472">Membrane</keyword>
<keyword id="KW-0675">Receptor</keyword>
<keyword id="KW-0807">Transducer</keyword>
<keyword id="KW-0812">Transmembrane</keyword>
<keyword id="KW-1133">Transmembrane helix</keyword>
<evidence type="ECO:0000255" key="1"/>
<evidence type="ECO:0000255" key="2">
    <source>
        <dbReference type="PROSITE-ProRule" id="PRU00521"/>
    </source>
</evidence>
<sequence>MGRIANQTTASNDTDPFGRNEEVAKMEITVLSVTFFVAVIGNLSVLLAMHNTKKKSSRMHLFIKHLSLADMVVAFFQVLPQLCWEITFRFYGPDFLCRIVKHLQVLGMFASTYMMVMMTLDRYIAICHPLKTLQQPTQRAYIMIGSTWLCSLLLSTPQYFIFSLSEIQNGSYVYDCWGHFIEPWGIRAYITWITVGIFLIPVIILMICYGFICHSIWKNIKCKTMRGTRNTKDGMIGKVSVSSVTIISRAKLRTVKMTLVIVLAYIVCWAPFFIVQMWSVWDENFSWDDSENAAVTLSALLASLNSCCNPWIYMLFSGHLLYDFLRCFPCCKKPRNMLQKEDSDSSIRRNTLLTKLAAGRMTNDGFGSWRDPCNSRKSSQSIGLDCFCKSSQCLEHDCSRKSSQCIPLDCSRKSSQCIPLDCSRKSSQCMSKES</sequence>
<organism>
    <name type="scientific">Catostomus commersonii</name>
    <name type="common">White sucker</name>
    <name type="synonym">Cyprinus commersonnii</name>
    <dbReference type="NCBI Taxonomy" id="7971"/>
    <lineage>
        <taxon>Eukaryota</taxon>
        <taxon>Metazoa</taxon>
        <taxon>Chordata</taxon>
        <taxon>Craniata</taxon>
        <taxon>Vertebrata</taxon>
        <taxon>Euteleostomi</taxon>
        <taxon>Actinopterygii</taxon>
        <taxon>Neopterygii</taxon>
        <taxon>Teleostei</taxon>
        <taxon>Ostariophysi</taxon>
        <taxon>Cypriniformes</taxon>
        <taxon>Catostomoidei</taxon>
        <taxon>Catostomidae</taxon>
        <taxon>Catostomus</taxon>
    </lineage>
</organism>
<proteinExistence type="evidence at transcript level"/>
<protein>
    <recommendedName>
        <fullName>[Arg8]-vasotocin receptor</fullName>
        <shortName>AVT</shortName>
    </recommendedName>
</protein>
<comment type="function">
    <text>Binds to vasotocin. Produces an induction of membrane chloride currents indicating that it is coupled to the inositol phosphate/calcium pathway.</text>
</comment>
<comment type="subcellular location">
    <subcellularLocation>
        <location>Cell membrane</location>
        <topology>Multi-pass membrane protein</topology>
    </subcellularLocation>
</comment>
<comment type="tissue specificity">
    <text>Expressed in pituitary, liver, gills, swim bladder and lateral line.</text>
</comment>
<comment type="similarity">
    <text evidence="2">Belongs to the G-protein coupled receptor 1 family. Vasopressin/oxytocin receptor subfamily.</text>
</comment>
<feature type="chain" id="PRO_0000069178" description="[Arg8]-vasotocin receptor">
    <location>
        <begin position="1"/>
        <end position="434"/>
    </location>
</feature>
<feature type="topological domain" description="Extracellular" evidence="1">
    <location>
        <begin position="1"/>
        <end position="27"/>
    </location>
</feature>
<feature type="transmembrane region" description="Helical; Name=1" evidence="1">
    <location>
        <begin position="28"/>
        <end position="48"/>
    </location>
</feature>
<feature type="topological domain" description="Cytoplasmic" evidence="1">
    <location>
        <begin position="49"/>
        <end position="67"/>
    </location>
</feature>
<feature type="transmembrane region" description="Helical; Name=2" evidence="1">
    <location>
        <begin position="68"/>
        <end position="88"/>
    </location>
</feature>
<feature type="topological domain" description="Extracellular" evidence="1">
    <location>
        <begin position="89"/>
        <end position="98"/>
    </location>
</feature>
<feature type="transmembrane region" description="Helical; Name=3" evidence="1">
    <location>
        <begin position="99"/>
        <end position="119"/>
    </location>
</feature>
<feature type="topological domain" description="Cytoplasmic" evidence="1">
    <location>
        <begin position="120"/>
        <end position="141"/>
    </location>
</feature>
<feature type="transmembrane region" description="Helical; Name=4" evidence="1">
    <location>
        <begin position="142"/>
        <end position="162"/>
    </location>
</feature>
<feature type="topological domain" description="Extracellular" evidence="1">
    <location>
        <begin position="163"/>
        <end position="191"/>
    </location>
</feature>
<feature type="transmembrane region" description="Helical; Name=5" evidence="1">
    <location>
        <begin position="192"/>
        <end position="212"/>
    </location>
</feature>
<feature type="topological domain" description="Cytoplasmic" evidence="1">
    <location>
        <begin position="213"/>
        <end position="257"/>
    </location>
</feature>
<feature type="transmembrane region" description="Helical; Name=6" evidence="1">
    <location>
        <begin position="258"/>
        <end position="278"/>
    </location>
</feature>
<feature type="topological domain" description="Extracellular" evidence="1">
    <location>
        <begin position="279"/>
        <end position="295"/>
    </location>
</feature>
<feature type="transmembrane region" description="Helical; Name=7" evidence="1">
    <location>
        <begin position="296"/>
        <end position="316"/>
    </location>
</feature>
<feature type="topological domain" description="Cytoplasmic" evidence="1">
    <location>
        <begin position="317"/>
        <end position="434"/>
    </location>
</feature>
<feature type="glycosylation site" description="N-linked (GlcNAc...) asparagine" evidence="1">
    <location>
        <position position="6"/>
    </location>
</feature>
<feature type="glycosylation site" description="N-linked (GlcNAc...) asparagine" evidence="1">
    <location>
        <position position="12"/>
    </location>
</feature>
<feature type="disulfide bond" evidence="2">
    <location>
        <begin position="97"/>
        <end position="176"/>
    </location>
</feature>
<name>AVT_CATCO</name>
<reference key="1">
    <citation type="journal article" date="1994" name="Proc. Natl. Acad. Sci. U.S.A.">
        <title>Structure, function, and phylogeny of [Arg8]vasotocin receptors from teleost fish and toad.</title>
        <authorList>
            <person name="Mahlmann S."/>
            <person name="Meyerhof W."/>
            <person name="Hausmann H."/>
            <person name="Heierhorst J."/>
            <person name="Schoenrock C."/>
            <person name="Zwiers H."/>
            <person name="Lederis K."/>
            <person name="Richter D."/>
        </authorList>
    </citation>
    <scope>NUCLEOTIDE SEQUENCE [MRNA]</scope>
    <source>
        <tissue>Brain</tissue>
    </source>
</reference>